<sequence>MASSGGGGGGGEEGEGRGATKVNQELWYACAGPLVSLPPQGSLIVYFPQGHSEQVAASMRKDADAQIPSYPNLPSKLICILHSVTMLADPDTDEVYARMTLQPVSNVTQCDKETLLASELALKQTRPQTEFFCKTLTASDTSTHGGFSVPRRAAERIFPRLDFSMQPPAQELQARDLHDNVWTFRHIYRGQPKRHLLTTGWSLFVSGKRLLAGDSVLFIRDAKQQLLLGIRRANRQPTNLSSSVLSSDSMHIGILAAAAHAAANNSQFTIYYNPRASTSEFVIPFAKYQKAVYGNQLSLGMRFRMMFETEESGTRRYMGTITGISDLDPVRWKTSHWRNIQVAWDEAAPTERRTRVSLWEIEPIIAPFFIYPSPLFTAKRPRLPGMTDDETEMDGLLKRAMPWVGEEICKKDLNIQNSVVPGLNLAQWMNMQHSSSLPGTVVQPELLNSLSGKPVQNLAAADLSRQISFHPQFLQQNNIQFNTALVPQQNQQTEQLAKVIPTPNQLGSVIIPQKVVQDCNSEQRQHVVTQPVQGSQPNINIPQPQLVVQAQLQQPQVILQAQLQQPQVVVQAQLQQTQPSVQSHTVLQGGLQQIQLLQQQQPHVQHQQIPQQLHHQQQQTQQLQPVQQVQQSVQEHQQIKIQPVHVSMDASMNTQVADHQMKLQLLKALQPQQPLISEQQKMLLDLQQQVINSQSAPQQCVQVTNQAISLHNSNTIQYPTQQKVQSHQVQDLTGNVIPNSKSDIATSMGASSLHVAGGRQLLKTDDVPSTSTSPSTNSNPVLLQSIPSSSKNQSLTTAGKTSQSSVVLGPTIEQDTKPYQNVKQTVMIPKTTEQRPATGQDCINNNPQMDYLDTSSSATSVCLSQADGSLQQNFPPSSFHQHHLLKDTVPDSEFEVTDPRNNLLFGVNIDGQLGLPLNADLLANDIGTDKYMDQLPGNGISNFISSKDSQQELSSSMISHSFGVADMAFNSIDSAINDTPFLNRNSRSAAGPAHQRMRTYTKVHKRGAVGRSIDINRYSGYDELKHDVARMFGIEGQLGDQNRVGWKLVYEDHEKDVLLVGDDPWEDFVKCVRCIRILSPQEEMQMRLVGDFGDSFLPNQACSSSDGGHPWRITGD</sequence>
<protein>
    <recommendedName>
        <fullName>Auxin response factor 21</fullName>
    </recommendedName>
    <alternativeName>
        <fullName>OsARF7b</fullName>
    </alternativeName>
</protein>
<dbReference type="EMBL" id="AP004622">
    <property type="protein sequence ID" value="BAD09704.1"/>
    <property type="molecule type" value="Genomic_DNA"/>
</dbReference>
<dbReference type="EMBL" id="AP005509">
    <property type="protein sequence ID" value="BAD10439.1"/>
    <property type="molecule type" value="Genomic_DNA"/>
</dbReference>
<dbReference type="EMBL" id="AP008214">
    <property type="protein sequence ID" value="BAF24182.1"/>
    <property type="status" value="ALT_SEQ"/>
    <property type="molecule type" value="Genomic_DNA"/>
</dbReference>
<dbReference type="EMBL" id="AP014964">
    <property type="status" value="NOT_ANNOTATED_CDS"/>
    <property type="molecule type" value="Genomic_DNA"/>
</dbReference>
<dbReference type="EMBL" id="AK111639">
    <property type="status" value="NOT_ANNOTATED_CDS"/>
    <property type="molecule type" value="mRNA"/>
</dbReference>
<dbReference type="EMBL" id="AB071297">
    <property type="protein sequence ID" value="BAB85917.1"/>
    <property type="molecule type" value="mRNA"/>
</dbReference>
<dbReference type="RefSeq" id="XP_015649755.1">
    <property type="nucleotide sequence ID" value="XM_015794269.1"/>
</dbReference>
<dbReference type="SMR" id="Q6YZW0"/>
<dbReference type="STRING" id="39947.Q6YZW0"/>
<dbReference type="PaxDb" id="39947-Q6YZW0"/>
<dbReference type="KEGG" id="dosa:Os08g0520500"/>
<dbReference type="eggNOG" id="ENOG502QV9B">
    <property type="taxonomic scope" value="Eukaryota"/>
</dbReference>
<dbReference type="HOGENOM" id="CLU_002626_2_3_1"/>
<dbReference type="InParanoid" id="Q6YZW0"/>
<dbReference type="OrthoDB" id="760842at2759"/>
<dbReference type="Proteomes" id="UP000000763">
    <property type="component" value="Chromosome 8"/>
</dbReference>
<dbReference type="Proteomes" id="UP000059680">
    <property type="component" value="Chromosome 8"/>
</dbReference>
<dbReference type="GO" id="GO:0005634">
    <property type="term" value="C:nucleus"/>
    <property type="evidence" value="ECO:0007669"/>
    <property type="project" value="UniProtKB-SubCell"/>
</dbReference>
<dbReference type="GO" id="GO:0003677">
    <property type="term" value="F:DNA binding"/>
    <property type="evidence" value="ECO:0007669"/>
    <property type="project" value="UniProtKB-KW"/>
</dbReference>
<dbReference type="GO" id="GO:0009734">
    <property type="term" value="P:auxin-activated signaling pathway"/>
    <property type="evidence" value="ECO:0007669"/>
    <property type="project" value="UniProtKB-KW"/>
</dbReference>
<dbReference type="GO" id="GO:0006355">
    <property type="term" value="P:regulation of DNA-templated transcription"/>
    <property type="evidence" value="ECO:0007669"/>
    <property type="project" value="InterPro"/>
</dbReference>
<dbReference type="CDD" id="cd10017">
    <property type="entry name" value="B3_DNA"/>
    <property type="match status" value="1"/>
</dbReference>
<dbReference type="FunFam" id="2.30.30.1040:FF:000001">
    <property type="entry name" value="Auxin response factor"/>
    <property type="match status" value="1"/>
</dbReference>
<dbReference type="FunFam" id="2.40.330.10:FF:000001">
    <property type="entry name" value="Auxin response factor"/>
    <property type="match status" value="1"/>
</dbReference>
<dbReference type="FunFam" id="3.10.20.90:FF:000047">
    <property type="entry name" value="Auxin response factor"/>
    <property type="match status" value="1"/>
</dbReference>
<dbReference type="Gene3D" id="2.30.30.1040">
    <property type="match status" value="1"/>
</dbReference>
<dbReference type="Gene3D" id="2.40.330.10">
    <property type="entry name" value="DNA-binding pseudobarrel domain"/>
    <property type="match status" value="1"/>
</dbReference>
<dbReference type="Gene3D" id="3.10.20.90">
    <property type="entry name" value="Phosphatidylinositol 3-kinase Catalytic Subunit, Chain A, domain 1"/>
    <property type="match status" value="1"/>
</dbReference>
<dbReference type="InterPro" id="IPR010525">
    <property type="entry name" value="ARF_dom"/>
</dbReference>
<dbReference type="InterPro" id="IPR044835">
    <property type="entry name" value="ARF_plant"/>
</dbReference>
<dbReference type="InterPro" id="IPR033389">
    <property type="entry name" value="AUX/IAA_dom"/>
</dbReference>
<dbReference type="InterPro" id="IPR003340">
    <property type="entry name" value="B3_DNA-bd"/>
</dbReference>
<dbReference type="InterPro" id="IPR015300">
    <property type="entry name" value="DNA-bd_pseudobarrel_sf"/>
</dbReference>
<dbReference type="InterPro" id="IPR053793">
    <property type="entry name" value="PB1-like"/>
</dbReference>
<dbReference type="PANTHER" id="PTHR31384:SF163">
    <property type="entry name" value="AUXIN RESPONSE FACTOR 21"/>
    <property type="match status" value="1"/>
</dbReference>
<dbReference type="PANTHER" id="PTHR31384">
    <property type="entry name" value="AUXIN RESPONSE FACTOR 4-RELATED"/>
    <property type="match status" value="1"/>
</dbReference>
<dbReference type="Pfam" id="PF06507">
    <property type="entry name" value="ARF_AD"/>
    <property type="match status" value="1"/>
</dbReference>
<dbReference type="Pfam" id="PF02309">
    <property type="entry name" value="AUX_IAA"/>
    <property type="match status" value="1"/>
</dbReference>
<dbReference type="Pfam" id="PF02362">
    <property type="entry name" value="B3"/>
    <property type="match status" value="1"/>
</dbReference>
<dbReference type="SMART" id="SM01019">
    <property type="entry name" value="B3"/>
    <property type="match status" value="1"/>
</dbReference>
<dbReference type="SUPFAM" id="SSF54277">
    <property type="entry name" value="CAD &amp; PB1 domains"/>
    <property type="match status" value="1"/>
</dbReference>
<dbReference type="SUPFAM" id="SSF101936">
    <property type="entry name" value="DNA-binding pseudobarrel domain"/>
    <property type="match status" value="1"/>
</dbReference>
<dbReference type="PROSITE" id="PS50863">
    <property type="entry name" value="B3"/>
    <property type="match status" value="1"/>
</dbReference>
<dbReference type="PROSITE" id="PS51745">
    <property type="entry name" value="PB1"/>
    <property type="match status" value="1"/>
</dbReference>
<organism>
    <name type="scientific">Oryza sativa subsp. japonica</name>
    <name type="common">Rice</name>
    <dbReference type="NCBI Taxonomy" id="39947"/>
    <lineage>
        <taxon>Eukaryota</taxon>
        <taxon>Viridiplantae</taxon>
        <taxon>Streptophyta</taxon>
        <taxon>Embryophyta</taxon>
        <taxon>Tracheophyta</taxon>
        <taxon>Spermatophyta</taxon>
        <taxon>Magnoliopsida</taxon>
        <taxon>Liliopsida</taxon>
        <taxon>Poales</taxon>
        <taxon>Poaceae</taxon>
        <taxon>BOP clade</taxon>
        <taxon>Oryzoideae</taxon>
        <taxon>Oryzeae</taxon>
        <taxon>Oryzinae</taxon>
        <taxon>Oryza</taxon>
        <taxon>Oryza sativa</taxon>
    </lineage>
</organism>
<proteinExistence type="evidence at transcript level"/>
<gene>
    <name type="primary">ARF21</name>
    <name type="synonym">ARF7B</name>
    <name type="ordered locus">Os08g0520500</name>
    <name type="ordered locus">LOC_Os08g40900</name>
    <name type="ORF">OJ1003_A09.14</name>
    <name type="ORF">P0689E12.38</name>
</gene>
<reference key="1">
    <citation type="journal article" date="2005" name="Nature">
        <title>The map-based sequence of the rice genome.</title>
        <authorList>
            <consortium name="International rice genome sequencing project (IRGSP)"/>
        </authorList>
    </citation>
    <scope>NUCLEOTIDE SEQUENCE [LARGE SCALE GENOMIC DNA]</scope>
    <source>
        <strain>cv. Nipponbare</strain>
    </source>
</reference>
<reference key="2">
    <citation type="journal article" date="2008" name="Nucleic Acids Res.">
        <title>The rice annotation project database (RAP-DB): 2008 update.</title>
        <authorList>
            <consortium name="The rice annotation project (RAP)"/>
        </authorList>
    </citation>
    <scope>GENOME REANNOTATION</scope>
    <source>
        <strain>cv. Nipponbare</strain>
    </source>
</reference>
<reference key="3">
    <citation type="journal article" date="2013" name="Rice">
        <title>Improvement of the Oryza sativa Nipponbare reference genome using next generation sequence and optical map data.</title>
        <authorList>
            <person name="Kawahara Y."/>
            <person name="de la Bastide M."/>
            <person name="Hamilton J.P."/>
            <person name="Kanamori H."/>
            <person name="McCombie W.R."/>
            <person name="Ouyang S."/>
            <person name="Schwartz D.C."/>
            <person name="Tanaka T."/>
            <person name="Wu J."/>
            <person name="Zhou S."/>
            <person name="Childs K.L."/>
            <person name="Davidson R.M."/>
            <person name="Lin H."/>
            <person name="Quesada-Ocampo L."/>
            <person name="Vaillancourt B."/>
            <person name="Sakai H."/>
            <person name="Lee S.S."/>
            <person name="Kim J."/>
            <person name="Numa H."/>
            <person name="Itoh T."/>
            <person name="Buell C.R."/>
            <person name="Matsumoto T."/>
        </authorList>
    </citation>
    <scope>GENOME REANNOTATION</scope>
    <source>
        <strain>cv. Nipponbare</strain>
    </source>
</reference>
<reference key="4">
    <citation type="journal article" date="2003" name="Science">
        <title>Collection, mapping, and annotation of over 28,000 cDNA clones from japonica rice.</title>
        <authorList>
            <consortium name="The rice full-length cDNA consortium"/>
        </authorList>
    </citation>
    <scope>NUCLEOTIDE SEQUENCE [LARGE SCALE MRNA] OF 1-637 (ISOFORM 1)</scope>
    <source>
        <strain>cv. Nipponbare</strain>
    </source>
</reference>
<reference key="5">
    <citation type="journal article" date="2001" name="Genes Genet. Syst.">
        <title>Auxin response factor family in rice.</title>
        <authorList>
            <person name="Sato Y."/>
            <person name="Nishimura A."/>
            <person name="Ito M."/>
            <person name="Ashikari M."/>
            <person name="Hirano H.-Y."/>
            <person name="Matsuoka M."/>
        </authorList>
    </citation>
    <scope>NUCLEOTIDE SEQUENCE [MRNA] OF 18-1113 (ISOFORM 2)</scope>
    <source>
        <strain>cv. Nipponbare</strain>
    </source>
</reference>
<reference key="6">
    <citation type="journal article" date="2007" name="Gene">
        <title>Genome-wide analysis of the auxin response factors (ARF) gene family in rice (Oryza sativa).</title>
        <authorList>
            <person name="Wang D."/>
            <person name="Pei K."/>
            <person name="Fu Y."/>
            <person name="Sun Z."/>
            <person name="Li S."/>
            <person name="Liu H."/>
            <person name="Tang K."/>
            <person name="Han B."/>
            <person name="Tao Y."/>
        </authorList>
    </citation>
    <scope>GENE FAMILY</scope>
    <scope>TISSUE SPECIFICITY</scope>
    <scope>INDUCTION</scope>
    <scope>NOMENCLATURE</scope>
</reference>
<evidence type="ECO:0000250" key="1"/>
<evidence type="ECO:0000255" key="2">
    <source>
        <dbReference type="PROSITE-ProRule" id="PRU00326"/>
    </source>
</evidence>
<evidence type="ECO:0000255" key="3">
    <source>
        <dbReference type="PROSITE-ProRule" id="PRU01081"/>
    </source>
</evidence>
<evidence type="ECO:0000256" key="4">
    <source>
        <dbReference type="SAM" id="MobiDB-lite"/>
    </source>
</evidence>
<evidence type="ECO:0000269" key="5">
    <source>
    </source>
</evidence>
<evidence type="ECO:0000303" key="6">
    <source>
    </source>
</evidence>
<evidence type="ECO:0000305" key="7"/>
<feature type="chain" id="PRO_0000299280" description="Auxin response factor 21">
    <location>
        <begin position="1"/>
        <end position="1116"/>
    </location>
</feature>
<feature type="domain" description="PB1" evidence="3">
    <location>
        <begin position="998"/>
        <end position="1082"/>
    </location>
</feature>
<feature type="DNA-binding region" description="TF-B3" evidence="2">
    <location>
        <begin position="132"/>
        <end position="234"/>
    </location>
</feature>
<feature type="region of interest" description="Disordered" evidence="4">
    <location>
        <begin position="763"/>
        <end position="812"/>
    </location>
</feature>
<feature type="compositionally biased region" description="Low complexity" evidence="4">
    <location>
        <begin position="768"/>
        <end position="780"/>
    </location>
</feature>
<feature type="compositionally biased region" description="Polar residues" evidence="4">
    <location>
        <begin position="781"/>
        <end position="806"/>
    </location>
</feature>
<feature type="splice variant" id="VSP_027593" description="In isoform 2." evidence="6">
    <location>
        <begin position="107"/>
        <end position="109"/>
    </location>
</feature>
<feature type="sequence conflict" description="In Ref. 4; AK111639." evidence="7" ref="4">
    <original>F</original>
    <variation>L</variation>
    <location>
        <position position="132"/>
    </location>
</feature>
<name>ARFU_ORYSJ</name>
<keyword id="KW-0025">Alternative splicing</keyword>
<keyword id="KW-0927">Auxin signaling pathway</keyword>
<keyword id="KW-0238">DNA-binding</keyword>
<keyword id="KW-0539">Nucleus</keyword>
<keyword id="KW-1185">Reference proteome</keyword>
<keyword id="KW-0804">Transcription</keyword>
<keyword id="KW-0805">Transcription regulation</keyword>
<comment type="function">
    <text>Auxin response factors (ARFs) are transcriptional factors that bind specifically to the DNA sequence 5'-TGTCTC-3' found in the auxin-responsive promoter elements (AuxREs).</text>
</comment>
<comment type="subunit">
    <text evidence="1">Homodimers and heterodimers.</text>
</comment>
<comment type="subcellular location">
    <subcellularLocation>
        <location evidence="2">Nucleus</location>
    </subcellularLocation>
</comment>
<comment type="alternative products">
    <event type="alternative splicing"/>
    <isoform>
        <id>Q6YZW0-1</id>
        <name>1</name>
        <sequence type="displayed"/>
    </isoform>
    <isoform>
        <id>Q6YZW0-2</id>
        <name>2</name>
        <sequence type="described" ref="VSP_027593"/>
    </isoform>
</comment>
<comment type="tissue specificity">
    <text evidence="5">Expressed in roots, culms, leaves and young panicles.</text>
</comment>
<comment type="induction">
    <text evidence="5">By auxin under dark condition. Down-regulated by auxin under light condition.</text>
</comment>
<comment type="domain">
    <text>Interactions between auxin response factors (ARFs) and Aux/IAA proteins occur through their C-terminal dimerization domains III and IV.</text>
</comment>
<comment type="miscellaneous">
    <molecule>Isoform 2</molecule>
    <text evidence="7">May be due to competing acceptor splice site.</text>
</comment>
<comment type="similarity">
    <text evidence="7">Belongs to the ARF family.</text>
</comment>
<comment type="sequence caution" evidence="7">
    <conflict type="erroneous gene model prediction">
        <sequence resource="EMBL-CDS" id="BAF24182"/>
    </conflict>
</comment>
<accession>Q6YZW0</accession>
<accession>Q0J4D1</accession>
<accession>Q8S978</accession>